<keyword id="KW-0025">Alternative splicing</keyword>
<keyword id="KW-0067">ATP-binding</keyword>
<keyword id="KW-0150">Chloroplast</keyword>
<keyword id="KW-0418">Kinase</keyword>
<keyword id="KW-0460">Magnesium</keyword>
<keyword id="KW-0479">Metal-binding</keyword>
<keyword id="KW-0545">Nucleotide biosynthesis</keyword>
<keyword id="KW-0547">Nucleotide-binding</keyword>
<keyword id="KW-0934">Plastid</keyword>
<keyword id="KW-1185">Reference proteome</keyword>
<keyword id="KW-0808">Transferase</keyword>
<keyword id="KW-0809">Transit peptide</keyword>
<gene>
    <name type="primary">PRS5</name>
    <name type="ordered locus">At2g44530</name>
    <name type="ORF">F16B22.2</name>
</gene>
<proteinExistence type="evidence at transcript level"/>
<name>KPRS5_ARATH</name>
<evidence type="ECO:0000255" key="1"/>
<evidence type="ECO:0000305" key="2"/>
<reference key="1">
    <citation type="journal article" date="1999" name="Nature">
        <title>Sequence and analysis of chromosome 2 of the plant Arabidopsis thaliana.</title>
        <authorList>
            <person name="Lin X."/>
            <person name="Kaul S."/>
            <person name="Rounsley S.D."/>
            <person name="Shea T.P."/>
            <person name="Benito M.-I."/>
            <person name="Town C.D."/>
            <person name="Fujii C.Y."/>
            <person name="Mason T.M."/>
            <person name="Bowman C.L."/>
            <person name="Barnstead M.E."/>
            <person name="Feldblyum T.V."/>
            <person name="Buell C.R."/>
            <person name="Ketchum K.A."/>
            <person name="Lee J.J."/>
            <person name="Ronning C.M."/>
            <person name="Koo H.L."/>
            <person name="Moffat K.S."/>
            <person name="Cronin L.A."/>
            <person name="Shen M."/>
            <person name="Pai G."/>
            <person name="Van Aken S."/>
            <person name="Umayam L."/>
            <person name="Tallon L.J."/>
            <person name="Gill J.E."/>
            <person name="Adams M.D."/>
            <person name="Carrera A.J."/>
            <person name="Creasy T.H."/>
            <person name="Goodman H.M."/>
            <person name="Somerville C.R."/>
            <person name="Copenhaver G.P."/>
            <person name="Preuss D."/>
            <person name="Nierman W.C."/>
            <person name="White O."/>
            <person name="Eisen J.A."/>
            <person name="Salzberg S.L."/>
            <person name="Fraser C.M."/>
            <person name="Venter J.C."/>
        </authorList>
    </citation>
    <scope>NUCLEOTIDE SEQUENCE [LARGE SCALE GENOMIC DNA]</scope>
    <source>
        <strain>cv. Columbia</strain>
    </source>
</reference>
<reference key="2">
    <citation type="journal article" date="2017" name="Plant J.">
        <title>Araport11: a complete reannotation of the Arabidopsis thaliana reference genome.</title>
        <authorList>
            <person name="Cheng C.Y."/>
            <person name="Krishnakumar V."/>
            <person name="Chan A.P."/>
            <person name="Thibaud-Nissen F."/>
            <person name="Schobel S."/>
            <person name="Town C.D."/>
        </authorList>
    </citation>
    <scope>GENOME REANNOTATION</scope>
    <source>
        <strain>cv. Columbia</strain>
    </source>
</reference>
<reference key="3">
    <citation type="journal article" date="2003" name="Science">
        <title>Empirical analysis of transcriptional activity in the Arabidopsis genome.</title>
        <authorList>
            <person name="Yamada K."/>
            <person name="Lim J."/>
            <person name="Dale J.M."/>
            <person name="Chen H."/>
            <person name="Shinn P."/>
            <person name="Palm C.J."/>
            <person name="Southwick A.M."/>
            <person name="Wu H.C."/>
            <person name="Kim C.J."/>
            <person name="Nguyen M."/>
            <person name="Pham P.K."/>
            <person name="Cheuk R.F."/>
            <person name="Karlin-Newmann G."/>
            <person name="Liu S.X."/>
            <person name="Lam B."/>
            <person name="Sakano H."/>
            <person name="Wu T."/>
            <person name="Yu G."/>
            <person name="Miranda M."/>
            <person name="Quach H.L."/>
            <person name="Tripp M."/>
            <person name="Chang C.H."/>
            <person name="Lee J.M."/>
            <person name="Toriumi M.J."/>
            <person name="Chan M.M."/>
            <person name="Tang C.C."/>
            <person name="Onodera C.S."/>
            <person name="Deng J.M."/>
            <person name="Akiyama K."/>
            <person name="Ansari Y."/>
            <person name="Arakawa T."/>
            <person name="Banh J."/>
            <person name="Banno F."/>
            <person name="Bowser L."/>
            <person name="Brooks S.Y."/>
            <person name="Carninci P."/>
            <person name="Chao Q."/>
            <person name="Choy N."/>
            <person name="Enju A."/>
            <person name="Goldsmith A.D."/>
            <person name="Gurjal M."/>
            <person name="Hansen N.F."/>
            <person name="Hayashizaki Y."/>
            <person name="Johnson-Hopson C."/>
            <person name="Hsuan V.W."/>
            <person name="Iida K."/>
            <person name="Karnes M."/>
            <person name="Khan S."/>
            <person name="Koesema E."/>
            <person name="Ishida J."/>
            <person name="Jiang P.X."/>
            <person name="Jones T."/>
            <person name="Kawai J."/>
            <person name="Kamiya A."/>
            <person name="Meyers C."/>
            <person name="Nakajima M."/>
            <person name="Narusaka M."/>
            <person name="Seki M."/>
            <person name="Sakurai T."/>
            <person name="Satou M."/>
            <person name="Tamse R."/>
            <person name="Vaysberg M."/>
            <person name="Wallender E.K."/>
            <person name="Wong C."/>
            <person name="Yamamura Y."/>
            <person name="Yuan S."/>
            <person name="Shinozaki K."/>
            <person name="Davis R.W."/>
            <person name="Theologis A."/>
            <person name="Ecker J.R."/>
        </authorList>
    </citation>
    <scope>NUCLEOTIDE SEQUENCE [LARGE SCALE MRNA]</scope>
    <source>
        <strain>cv. Columbia</strain>
    </source>
</reference>
<feature type="transit peptide" description="Chloroplast" evidence="1">
    <location>
        <begin position="1"/>
        <end position="33"/>
    </location>
</feature>
<feature type="chain" id="PRO_0000141096" description="Ribose-phosphate pyrophosphokinase 5, chloroplastic">
    <location>
        <begin position="34"/>
        <end position="394"/>
    </location>
</feature>
<feature type="region of interest" description="Binding of phosphoribosylpyrophosphate" evidence="1">
    <location>
        <begin position="288"/>
        <end position="303"/>
    </location>
</feature>
<feature type="binding site" evidence="1">
    <location>
        <position position="202"/>
    </location>
    <ligand>
        <name>Mg(2+)</name>
        <dbReference type="ChEBI" id="CHEBI:18420"/>
    </ligand>
</feature>
<feature type="binding site" evidence="1">
    <location>
        <position position="204"/>
    </location>
    <ligand>
        <name>Mg(2+)</name>
        <dbReference type="ChEBI" id="CHEBI:18420"/>
    </ligand>
</feature>
<feature type="binding site" evidence="1">
    <location>
        <position position="213"/>
    </location>
    <ligand>
        <name>Mg(2+)</name>
        <dbReference type="ChEBI" id="CHEBI:18420"/>
    </ligand>
</feature>
<feature type="binding site" evidence="1">
    <location>
        <position position="217"/>
    </location>
    <ligand>
        <name>Mg(2+)</name>
        <dbReference type="ChEBI" id="CHEBI:18420"/>
    </ligand>
</feature>
<comment type="catalytic activity">
    <reaction>
        <text>D-ribose 5-phosphate + ATP = 5-phospho-alpha-D-ribose 1-diphosphate + AMP + H(+)</text>
        <dbReference type="Rhea" id="RHEA:15609"/>
        <dbReference type="ChEBI" id="CHEBI:15378"/>
        <dbReference type="ChEBI" id="CHEBI:30616"/>
        <dbReference type="ChEBI" id="CHEBI:58017"/>
        <dbReference type="ChEBI" id="CHEBI:78346"/>
        <dbReference type="ChEBI" id="CHEBI:456215"/>
        <dbReference type="EC" id="2.7.6.1"/>
    </reaction>
</comment>
<comment type="subcellular location">
    <subcellularLocation>
        <location evidence="2">Plastid</location>
        <location evidence="2">Chloroplast</location>
    </subcellularLocation>
</comment>
<comment type="alternative products">
    <event type="alternative splicing"/>
    <isoform>
        <id>O64888-1</id>
        <name>1</name>
        <sequence type="displayed"/>
    </isoform>
    <text>A number of isoforms are produced. According to EST sequences.</text>
</comment>
<comment type="similarity">
    <text evidence="2">Belongs to the ribose-phosphate pyrophosphokinase family.</text>
</comment>
<comment type="sequence caution" evidence="2">
    <conflict type="erroneous gene model prediction">
        <sequence resource="EMBL-CDS" id="AAC27455"/>
    </conflict>
</comment>
<comment type="sequence caution" evidence="2">
    <conflict type="erroneous gene model prediction">
        <sequence resource="EMBL-CDS" id="AAM14963"/>
    </conflict>
</comment>
<organism>
    <name type="scientific">Arabidopsis thaliana</name>
    <name type="common">Mouse-ear cress</name>
    <dbReference type="NCBI Taxonomy" id="3702"/>
    <lineage>
        <taxon>Eukaryota</taxon>
        <taxon>Viridiplantae</taxon>
        <taxon>Streptophyta</taxon>
        <taxon>Embryophyta</taxon>
        <taxon>Tracheophyta</taxon>
        <taxon>Spermatophyta</taxon>
        <taxon>Magnoliopsida</taxon>
        <taxon>eudicotyledons</taxon>
        <taxon>Gunneridae</taxon>
        <taxon>Pentapetalae</taxon>
        <taxon>rosids</taxon>
        <taxon>malvids</taxon>
        <taxon>Brassicales</taxon>
        <taxon>Brassicaceae</taxon>
        <taxon>Camelineae</taxon>
        <taxon>Arabidopsis</taxon>
    </lineage>
</organism>
<sequence length="394" mass="42625">MASIVQPSPTFPALNLRRSSLIRPPSSVRFPLKCNAADPYKFDGGNSAGFHLLTGDTVPASFSRTRLEDSIYQNTTRLRIFSGTANPILAQEISCYLGLDLGKIKIKRFADGEIYVQLQESVRGCDVFLVQPTCPPANENLMELLVMIDACRRASAKTITAVIPYFGYARADRKTQGRESIAAKLVANLITQSGADRVLACDLHSGQSMGYFDIPVDHVYGQPVILDYLASKAISSEDLVVVSPDVGGVARARAFAKKLSDAPLAIVDKRRHGHNVAEVMNLIGDVKGKVAIMVDDMIDTAGTISKGAALLHQEGAREVYACTTHAVFSPPAISRLSSGLFQEVIITNTIPLSEKNYFPQLTVLSVANLLGETIWRVHDDCSGAIEPFSTLGID</sequence>
<dbReference type="EC" id="2.7.6.1"/>
<dbReference type="EMBL" id="AC003672">
    <property type="protein sequence ID" value="AAC27455.1"/>
    <property type="status" value="ALT_SEQ"/>
    <property type="molecule type" value="Genomic_DNA"/>
</dbReference>
<dbReference type="EMBL" id="AC004521">
    <property type="protein sequence ID" value="AAM14963.1"/>
    <property type="status" value="ALT_SEQ"/>
    <property type="molecule type" value="Genomic_DNA"/>
</dbReference>
<dbReference type="EMBL" id="CP002685">
    <property type="protein sequence ID" value="AEC10434.1"/>
    <property type="molecule type" value="Genomic_DNA"/>
</dbReference>
<dbReference type="EMBL" id="AY127024">
    <property type="protein sequence ID" value="AAM83248.1"/>
    <property type="molecule type" value="mRNA"/>
</dbReference>
<dbReference type="EMBL" id="BT001041">
    <property type="protein sequence ID" value="AAN46795.1"/>
    <property type="molecule type" value="mRNA"/>
</dbReference>
<dbReference type="PIR" id="T02409">
    <property type="entry name" value="T02409"/>
</dbReference>
<dbReference type="RefSeq" id="NP_181981.2">
    <molecule id="O64888-1"/>
    <property type="nucleotide sequence ID" value="NM_130017.5"/>
</dbReference>
<dbReference type="SMR" id="O64888"/>
<dbReference type="BioGRID" id="4397">
    <property type="interactions" value="34"/>
</dbReference>
<dbReference type="FunCoup" id="O64888">
    <property type="interactions" value="3439"/>
</dbReference>
<dbReference type="IntAct" id="O64888">
    <property type="interactions" value="2"/>
</dbReference>
<dbReference type="STRING" id="3702.O64888"/>
<dbReference type="iPTMnet" id="O64888"/>
<dbReference type="PaxDb" id="3702-AT2G44530.1"/>
<dbReference type="EnsemblPlants" id="AT2G44530.1">
    <molecule id="O64888-1"/>
    <property type="protein sequence ID" value="AT2G44530.1"/>
    <property type="gene ID" value="AT2G44530"/>
</dbReference>
<dbReference type="GeneID" id="819061"/>
<dbReference type="Gramene" id="AT2G44530.1">
    <molecule id="O64888-1"/>
    <property type="protein sequence ID" value="AT2G44530.1"/>
    <property type="gene ID" value="AT2G44530"/>
</dbReference>
<dbReference type="KEGG" id="ath:AT2G44530"/>
<dbReference type="Araport" id="AT2G44530"/>
<dbReference type="TAIR" id="AT2G44530">
    <property type="gene designation" value="PRS5"/>
</dbReference>
<dbReference type="eggNOG" id="KOG1448">
    <property type="taxonomic scope" value="Eukaryota"/>
</dbReference>
<dbReference type="InParanoid" id="O64888"/>
<dbReference type="OrthoDB" id="413572at2759"/>
<dbReference type="PhylomeDB" id="O64888"/>
<dbReference type="BioCyc" id="ARA:AT2G44530-MONOMER"/>
<dbReference type="CD-CODE" id="4299E36E">
    <property type="entry name" value="Nucleolus"/>
</dbReference>
<dbReference type="PRO" id="PR:O64888"/>
<dbReference type="Proteomes" id="UP000006548">
    <property type="component" value="Chromosome 2"/>
</dbReference>
<dbReference type="ExpressionAtlas" id="O64888">
    <property type="expression patterns" value="baseline and differential"/>
</dbReference>
<dbReference type="GO" id="GO:0009507">
    <property type="term" value="C:chloroplast"/>
    <property type="evidence" value="ECO:0007669"/>
    <property type="project" value="UniProtKB-SubCell"/>
</dbReference>
<dbReference type="GO" id="GO:0009536">
    <property type="term" value="C:plastid"/>
    <property type="evidence" value="ECO:0007005"/>
    <property type="project" value="TAIR"/>
</dbReference>
<dbReference type="GO" id="GO:0005524">
    <property type="term" value="F:ATP binding"/>
    <property type="evidence" value="ECO:0007669"/>
    <property type="project" value="UniProtKB-KW"/>
</dbReference>
<dbReference type="GO" id="GO:0016301">
    <property type="term" value="F:kinase activity"/>
    <property type="evidence" value="ECO:0007669"/>
    <property type="project" value="UniProtKB-KW"/>
</dbReference>
<dbReference type="GO" id="GO:0000287">
    <property type="term" value="F:magnesium ion binding"/>
    <property type="evidence" value="ECO:0007669"/>
    <property type="project" value="InterPro"/>
</dbReference>
<dbReference type="GO" id="GO:0004749">
    <property type="term" value="F:ribose phosphate diphosphokinase activity"/>
    <property type="evidence" value="ECO:0007669"/>
    <property type="project" value="UniProtKB-EC"/>
</dbReference>
<dbReference type="GO" id="GO:0009165">
    <property type="term" value="P:nucleotide biosynthetic process"/>
    <property type="evidence" value="ECO:0007669"/>
    <property type="project" value="UniProtKB-KW"/>
</dbReference>
<dbReference type="GO" id="GO:0009156">
    <property type="term" value="P:ribonucleoside monophosphate biosynthetic process"/>
    <property type="evidence" value="ECO:0007669"/>
    <property type="project" value="InterPro"/>
</dbReference>
<dbReference type="CDD" id="cd06223">
    <property type="entry name" value="PRTases_typeI"/>
    <property type="match status" value="1"/>
</dbReference>
<dbReference type="FunFam" id="3.40.50.2020:FF:000007">
    <property type="entry name" value="Ribose-phosphate pyrophosphokinase"/>
    <property type="match status" value="1"/>
</dbReference>
<dbReference type="Gene3D" id="3.40.50.2020">
    <property type="match status" value="2"/>
</dbReference>
<dbReference type="HAMAP" id="MF_00583_B">
    <property type="entry name" value="RibP_PPkinase_B"/>
    <property type="match status" value="1"/>
</dbReference>
<dbReference type="InterPro" id="IPR000842">
    <property type="entry name" value="PRib_PP_synth_CS"/>
</dbReference>
<dbReference type="InterPro" id="IPR029099">
    <property type="entry name" value="Pribosyltran_N"/>
</dbReference>
<dbReference type="InterPro" id="IPR000836">
    <property type="entry name" value="PRibTrfase_dom"/>
</dbReference>
<dbReference type="InterPro" id="IPR029057">
    <property type="entry name" value="PRTase-like"/>
</dbReference>
<dbReference type="InterPro" id="IPR005946">
    <property type="entry name" value="Rib-P_diPkinase"/>
</dbReference>
<dbReference type="InterPro" id="IPR037515">
    <property type="entry name" value="Rib-P_diPkinase_bac"/>
</dbReference>
<dbReference type="NCBIfam" id="NF002320">
    <property type="entry name" value="PRK01259.1"/>
    <property type="match status" value="1"/>
</dbReference>
<dbReference type="NCBIfam" id="NF002758">
    <property type="entry name" value="PRK02812.1"/>
    <property type="match status" value="1"/>
</dbReference>
<dbReference type="NCBIfam" id="TIGR01251">
    <property type="entry name" value="ribP_PPkin"/>
    <property type="match status" value="1"/>
</dbReference>
<dbReference type="PANTHER" id="PTHR10210">
    <property type="entry name" value="RIBOSE-PHOSPHATE DIPHOSPHOKINASE FAMILY MEMBER"/>
    <property type="match status" value="1"/>
</dbReference>
<dbReference type="PANTHER" id="PTHR10210:SF120">
    <property type="entry name" value="RIBOSE-PHOSPHATE PYROPHOSPHOKINASE 5, CHLOROPLASTIC"/>
    <property type="match status" value="1"/>
</dbReference>
<dbReference type="Pfam" id="PF14572">
    <property type="entry name" value="Pribosyl_synth"/>
    <property type="match status" value="1"/>
</dbReference>
<dbReference type="Pfam" id="PF13793">
    <property type="entry name" value="Pribosyltran_N"/>
    <property type="match status" value="1"/>
</dbReference>
<dbReference type="SMART" id="SM01400">
    <property type="entry name" value="Pribosyltran_N"/>
    <property type="match status" value="1"/>
</dbReference>
<dbReference type="SUPFAM" id="SSF53271">
    <property type="entry name" value="PRTase-like"/>
    <property type="match status" value="1"/>
</dbReference>
<dbReference type="PROSITE" id="PS00114">
    <property type="entry name" value="PRPP_SYNTHASE"/>
    <property type="match status" value="1"/>
</dbReference>
<accession>O64888</accession>
<accession>Q8L7T8</accession>
<protein>
    <recommendedName>
        <fullName>Ribose-phosphate pyrophosphokinase 5, chloroplastic</fullName>
        <ecNumber>2.7.6.1</ecNumber>
    </recommendedName>
    <alternativeName>
        <fullName>Phosphoribosyl pyrophosphate synthase 5</fullName>
    </alternativeName>
</protein>